<organism>
    <name type="scientific">Saccharomyces cerevisiae (strain ATCC 204508 / S288c)</name>
    <name type="common">Baker's yeast</name>
    <dbReference type="NCBI Taxonomy" id="559292"/>
    <lineage>
        <taxon>Eukaryota</taxon>
        <taxon>Fungi</taxon>
        <taxon>Dikarya</taxon>
        <taxon>Ascomycota</taxon>
        <taxon>Saccharomycotina</taxon>
        <taxon>Saccharomycetes</taxon>
        <taxon>Saccharomycetales</taxon>
        <taxon>Saccharomycetaceae</taxon>
        <taxon>Saccharomyces</taxon>
    </lineage>
</organism>
<dbReference type="EMBL" id="Z46617">
    <property type="protein sequence ID" value="CAA86588.1"/>
    <property type="molecule type" value="Genomic_DNA"/>
</dbReference>
<dbReference type="EMBL" id="X83754">
    <property type="protein sequence ID" value="CAA58712.1"/>
    <property type="molecule type" value="Genomic_DNA"/>
</dbReference>
<dbReference type="EMBL" id="Z74193">
    <property type="protein sequence ID" value="CAA98719.1"/>
    <property type="molecule type" value="Genomic_DNA"/>
</dbReference>
<dbReference type="EMBL" id="Z74192">
    <property type="protein sequence ID" value="CAA98718.1"/>
    <property type="molecule type" value="Genomic_DNA"/>
</dbReference>
<dbReference type="EMBL" id="X97751">
    <property type="protein sequence ID" value="CAA66346.1"/>
    <property type="molecule type" value="Genomic_DNA"/>
</dbReference>
<dbReference type="EMBL" id="BK006938">
    <property type="protein sequence ID" value="DAA11713.1"/>
    <property type="molecule type" value="Genomic_DNA"/>
</dbReference>
<dbReference type="PIR" id="S67692">
    <property type="entry name" value="ERBYA"/>
</dbReference>
<dbReference type="RefSeq" id="NP_010136.1">
    <property type="nucleotide sequence ID" value="NM_001180205.1"/>
</dbReference>
<dbReference type="PDB" id="3MKQ">
    <property type="method" value="X-ray"/>
    <property type="resolution" value="2.50 A"/>
    <property type="chains" value="B/D/F=642-818"/>
</dbReference>
<dbReference type="PDB" id="3MV2">
    <property type="method" value="X-ray"/>
    <property type="resolution" value="2.90 A"/>
    <property type="chains" value="A/C/E=900-1201"/>
</dbReference>
<dbReference type="PDB" id="3MV3">
    <property type="method" value="X-ray"/>
    <property type="resolution" value="3.25 A"/>
    <property type="chains" value="A/C/E=900-1201"/>
</dbReference>
<dbReference type="PDB" id="6U3W">
    <property type="method" value="X-ray"/>
    <property type="resolution" value="2.39 A"/>
    <property type="chains" value="A=899-1201"/>
</dbReference>
<dbReference type="PDBsum" id="3MKQ"/>
<dbReference type="PDBsum" id="3MV2"/>
<dbReference type="PDBsum" id="3MV3"/>
<dbReference type="PDBsum" id="6U3W"/>
<dbReference type="SMR" id="P53622"/>
<dbReference type="BioGRID" id="31916">
    <property type="interactions" value="687"/>
</dbReference>
<dbReference type="ComplexPortal" id="CPX-1652">
    <property type="entry name" value="COPI vesicle coat complex"/>
</dbReference>
<dbReference type="DIP" id="DIP-2582N"/>
<dbReference type="FunCoup" id="P53622">
    <property type="interactions" value="1552"/>
</dbReference>
<dbReference type="IntAct" id="P53622">
    <property type="interactions" value="90"/>
</dbReference>
<dbReference type="MINT" id="P53622"/>
<dbReference type="STRING" id="4932.YDL145C"/>
<dbReference type="TCDB" id="3.A.31.1.1">
    <property type="family name" value="the endosomal sorting complexes required for transport iii (escrt-iii) family"/>
</dbReference>
<dbReference type="CarbonylDB" id="P53622"/>
<dbReference type="iPTMnet" id="P53622"/>
<dbReference type="PaxDb" id="4932-YDL145C"/>
<dbReference type="PeptideAtlas" id="P53622"/>
<dbReference type="EnsemblFungi" id="YDL145C_mRNA">
    <property type="protein sequence ID" value="YDL145C"/>
    <property type="gene ID" value="YDL145C"/>
</dbReference>
<dbReference type="GeneID" id="851410"/>
<dbReference type="KEGG" id="sce:YDL145C"/>
<dbReference type="AGR" id="SGD:S000002304"/>
<dbReference type="SGD" id="S000002304">
    <property type="gene designation" value="COP1"/>
</dbReference>
<dbReference type="VEuPathDB" id="FungiDB:YDL145C"/>
<dbReference type="eggNOG" id="KOG0292">
    <property type="taxonomic scope" value="Eukaryota"/>
</dbReference>
<dbReference type="GeneTree" id="ENSGT00940000155451"/>
<dbReference type="HOGENOM" id="CLU_007565_1_0_1"/>
<dbReference type="InParanoid" id="P53622"/>
<dbReference type="OMA" id="EMTYQKQ"/>
<dbReference type="OrthoDB" id="10261470at2759"/>
<dbReference type="BioCyc" id="YEAST:G3O-29542-MONOMER"/>
<dbReference type="Reactome" id="R-SCE-6807878">
    <property type="pathway name" value="COPI-mediated anterograde transport"/>
</dbReference>
<dbReference type="Reactome" id="R-SCE-6811434">
    <property type="pathway name" value="COPI-dependent Golgi-to-ER retrograde traffic"/>
</dbReference>
<dbReference type="BioGRID-ORCS" id="851410">
    <property type="hits" value="6 hits in 10 CRISPR screens"/>
</dbReference>
<dbReference type="EvolutionaryTrace" id="P53622"/>
<dbReference type="PRO" id="PR:P53622"/>
<dbReference type="Proteomes" id="UP000002311">
    <property type="component" value="Chromosome IV"/>
</dbReference>
<dbReference type="RNAct" id="P53622">
    <property type="molecule type" value="protein"/>
</dbReference>
<dbReference type="GO" id="GO:0030126">
    <property type="term" value="C:COPI vesicle coat"/>
    <property type="evidence" value="ECO:0000314"/>
    <property type="project" value="SGD"/>
</dbReference>
<dbReference type="GO" id="GO:0000139">
    <property type="term" value="C:Golgi membrane"/>
    <property type="evidence" value="ECO:0007669"/>
    <property type="project" value="UniProtKB-SubCell"/>
</dbReference>
<dbReference type="GO" id="GO:0005198">
    <property type="term" value="F:structural molecule activity"/>
    <property type="evidence" value="ECO:0007669"/>
    <property type="project" value="InterPro"/>
</dbReference>
<dbReference type="GO" id="GO:0043130">
    <property type="term" value="F:ubiquitin binding"/>
    <property type="evidence" value="ECO:0000314"/>
    <property type="project" value="SGD"/>
</dbReference>
<dbReference type="GO" id="GO:0006888">
    <property type="term" value="P:endoplasmic reticulum to Golgi vesicle-mediated transport"/>
    <property type="evidence" value="ECO:0000315"/>
    <property type="project" value="SGD"/>
</dbReference>
<dbReference type="GO" id="GO:0006891">
    <property type="term" value="P:intra-Golgi vesicle-mediated transport"/>
    <property type="evidence" value="ECO:0000318"/>
    <property type="project" value="GO_Central"/>
</dbReference>
<dbReference type="GO" id="GO:0008298">
    <property type="term" value="P:intracellular mRNA localization"/>
    <property type="evidence" value="ECO:0000315"/>
    <property type="project" value="SGD"/>
</dbReference>
<dbReference type="GO" id="GO:0006886">
    <property type="term" value="P:intracellular protein transport"/>
    <property type="evidence" value="ECO:0000318"/>
    <property type="project" value="GO_Central"/>
</dbReference>
<dbReference type="GO" id="GO:0006890">
    <property type="term" value="P:retrograde vesicle-mediated transport, Golgi to endoplasmic reticulum"/>
    <property type="evidence" value="ECO:0000315"/>
    <property type="project" value="SGD"/>
</dbReference>
<dbReference type="CDD" id="cd22948">
    <property type="entry name" value="Coatomer_WDAD_alpha"/>
    <property type="match status" value="1"/>
</dbReference>
<dbReference type="CDD" id="cd00200">
    <property type="entry name" value="WD40"/>
    <property type="match status" value="1"/>
</dbReference>
<dbReference type="FunFam" id="1.25.40.470:FF:000002">
    <property type="entry name" value="Coatomer subunit alpha"/>
    <property type="match status" value="1"/>
</dbReference>
<dbReference type="FunFam" id="2.130.10.10:FF:000022">
    <property type="entry name" value="Coatomer subunit alpha"/>
    <property type="match status" value="1"/>
</dbReference>
<dbReference type="Gene3D" id="1.25.40.470">
    <property type="match status" value="1"/>
</dbReference>
<dbReference type="Gene3D" id="2.130.10.10">
    <property type="entry name" value="YVTN repeat-like/Quinoprotein amine dehydrogenase"/>
    <property type="match status" value="1"/>
</dbReference>
<dbReference type="InterPro" id="IPR006692">
    <property type="entry name" value="Beta-prop_COPA/B_2nd"/>
</dbReference>
<dbReference type="InterPro" id="IPR047312">
    <property type="entry name" value="Coatomer_alpha_WD-assoc_reg"/>
</dbReference>
<dbReference type="InterPro" id="IPR016391">
    <property type="entry name" value="Coatomer_asu"/>
</dbReference>
<dbReference type="InterPro" id="IPR010714">
    <property type="entry name" value="Coatomer_asu_C"/>
</dbReference>
<dbReference type="InterPro" id="IPR050844">
    <property type="entry name" value="Coatomer_complex_subunit"/>
</dbReference>
<dbReference type="InterPro" id="IPR020472">
    <property type="entry name" value="G-protein_beta_WD-40_rep"/>
</dbReference>
<dbReference type="InterPro" id="IPR011044">
    <property type="entry name" value="Quino_amine_DH_bsu"/>
</dbReference>
<dbReference type="InterPro" id="IPR056176">
    <property type="entry name" value="TPR_COPA_B"/>
</dbReference>
<dbReference type="InterPro" id="IPR015943">
    <property type="entry name" value="WD40/YVTN_repeat-like_dom_sf"/>
</dbReference>
<dbReference type="InterPro" id="IPR019775">
    <property type="entry name" value="WD40_repeat_CS"/>
</dbReference>
<dbReference type="InterPro" id="IPR036322">
    <property type="entry name" value="WD40_repeat_dom_sf"/>
</dbReference>
<dbReference type="InterPro" id="IPR001680">
    <property type="entry name" value="WD40_rpt"/>
</dbReference>
<dbReference type="PANTHER" id="PTHR19876">
    <property type="entry name" value="COATOMER"/>
    <property type="match status" value="1"/>
</dbReference>
<dbReference type="PANTHER" id="PTHR19876:SF1">
    <property type="entry name" value="COATOMER SUBUNIT ALPHA"/>
    <property type="match status" value="1"/>
</dbReference>
<dbReference type="Pfam" id="PF04053">
    <property type="entry name" value="B-prop_COPA_B_2nd"/>
    <property type="match status" value="1"/>
</dbReference>
<dbReference type="Pfam" id="PF06957">
    <property type="entry name" value="COPI_C"/>
    <property type="match status" value="1"/>
</dbReference>
<dbReference type="Pfam" id="PF23953">
    <property type="entry name" value="TPR_COPA_B"/>
    <property type="match status" value="1"/>
</dbReference>
<dbReference type="Pfam" id="PF00400">
    <property type="entry name" value="WD40"/>
    <property type="match status" value="5"/>
</dbReference>
<dbReference type="PIRSF" id="PIRSF003354">
    <property type="entry name" value="Coatomer_alpha_subunit"/>
    <property type="match status" value="1"/>
</dbReference>
<dbReference type="PRINTS" id="PR00320">
    <property type="entry name" value="GPROTEINBRPT"/>
</dbReference>
<dbReference type="SMART" id="SM00320">
    <property type="entry name" value="WD40"/>
    <property type="match status" value="7"/>
</dbReference>
<dbReference type="SUPFAM" id="SSF50978">
    <property type="entry name" value="WD40 repeat-like"/>
    <property type="match status" value="1"/>
</dbReference>
<dbReference type="SUPFAM" id="SSF50969">
    <property type="entry name" value="YVTN repeat-like/Quinoprotein amine dehydrogenase"/>
    <property type="match status" value="1"/>
</dbReference>
<dbReference type="PROSITE" id="PS00678">
    <property type="entry name" value="WD_REPEATS_1"/>
    <property type="match status" value="2"/>
</dbReference>
<dbReference type="PROSITE" id="PS50082">
    <property type="entry name" value="WD_REPEATS_2"/>
    <property type="match status" value="5"/>
</dbReference>
<dbReference type="PROSITE" id="PS50294">
    <property type="entry name" value="WD_REPEATS_REGION"/>
    <property type="match status" value="1"/>
</dbReference>
<reference key="1">
    <citation type="journal article" date="1994" name="Cell">
        <title>Coatomer is essential for retrieval of dilysine-tagged proteins to the endoplasmic reticulum.</title>
        <authorList>
            <person name="Letourneur F."/>
            <person name="Gaynor E.C."/>
            <person name="Hennecke S."/>
            <person name="Demolliere C."/>
            <person name="Durden R."/>
            <person name="Emr S.D."/>
            <person name="Riezman H."/>
            <person name="Cosson P."/>
        </authorList>
    </citation>
    <scope>NUCLEOTIDE SEQUENCE [GENOMIC DNA]</scope>
    <scope>PROTEIN SEQUENCE OF 1-20</scope>
    <source>
        <strain>PC70</strain>
    </source>
</reference>
<reference key="2">
    <citation type="journal article" date="1995" name="Proc. Natl. Acad. Sci. U.S.A.">
        <title>Non-clathrin-coat protein alpha is a conserved subunit of coatomer and in Saccharomyces cerevisiae is essential for growth.</title>
        <authorList>
            <person name="Gerich B."/>
            <person name="Orci L."/>
            <person name="Tschochner H."/>
            <person name="Lottspeich F."/>
            <person name="Ravazolla M."/>
            <person name="Amherdt M."/>
            <person name="Wieland F."/>
            <person name="Harter C."/>
        </authorList>
    </citation>
    <scope>NUCLEOTIDE SEQUENCE [GENOMIC DNA]</scope>
    <scope>PROTEIN SEQUENCE OF 1-24</scope>
    <scope>SUBCELLULAR LOCATION</scope>
    <source>
        <strain>RS453</strain>
    </source>
</reference>
<reference key="3">
    <citation type="journal article" date="1997" name="Nature">
        <title>The nucleotide sequence of Saccharomyces cerevisiae chromosome IV.</title>
        <authorList>
            <person name="Jacq C."/>
            <person name="Alt-Moerbe J."/>
            <person name="Andre B."/>
            <person name="Arnold W."/>
            <person name="Bahr A."/>
            <person name="Ballesta J.P.G."/>
            <person name="Bargues M."/>
            <person name="Baron L."/>
            <person name="Becker A."/>
            <person name="Biteau N."/>
            <person name="Bloecker H."/>
            <person name="Blugeon C."/>
            <person name="Boskovic J."/>
            <person name="Brandt P."/>
            <person name="Brueckner M."/>
            <person name="Buitrago M.J."/>
            <person name="Coster F."/>
            <person name="Delaveau T."/>
            <person name="del Rey F."/>
            <person name="Dujon B."/>
            <person name="Eide L.G."/>
            <person name="Garcia-Cantalejo J.M."/>
            <person name="Goffeau A."/>
            <person name="Gomez-Peris A."/>
            <person name="Granotier C."/>
            <person name="Hanemann V."/>
            <person name="Hankeln T."/>
            <person name="Hoheisel J.D."/>
            <person name="Jaeger W."/>
            <person name="Jimenez A."/>
            <person name="Jonniaux J.-L."/>
            <person name="Kraemer C."/>
            <person name="Kuester H."/>
            <person name="Laamanen P."/>
            <person name="Legros Y."/>
            <person name="Louis E.J."/>
            <person name="Moeller-Rieker S."/>
            <person name="Monnet A."/>
            <person name="Moro M."/>
            <person name="Mueller-Auer S."/>
            <person name="Nussbaumer B."/>
            <person name="Paricio N."/>
            <person name="Paulin L."/>
            <person name="Perea J."/>
            <person name="Perez-Alonso M."/>
            <person name="Perez-Ortin J.E."/>
            <person name="Pohl T.M."/>
            <person name="Prydz H."/>
            <person name="Purnelle B."/>
            <person name="Rasmussen S.W."/>
            <person name="Remacha M.A."/>
            <person name="Revuelta J.L."/>
            <person name="Rieger M."/>
            <person name="Salom D."/>
            <person name="Saluz H.P."/>
            <person name="Saiz J.E."/>
            <person name="Saren A.-M."/>
            <person name="Schaefer M."/>
            <person name="Scharfe M."/>
            <person name="Schmidt E.R."/>
            <person name="Schneider C."/>
            <person name="Scholler P."/>
            <person name="Schwarz S."/>
            <person name="Soler-Mira A."/>
            <person name="Urrestarazu L.A."/>
            <person name="Verhasselt P."/>
            <person name="Vissers S."/>
            <person name="Voet M."/>
            <person name="Volckaert G."/>
            <person name="Wagner G."/>
            <person name="Wambutt R."/>
            <person name="Wedler E."/>
            <person name="Wedler H."/>
            <person name="Woelfl S."/>
            <person name="Harris D.E."/>
            <person name="Bowman S."/>
            <person name="Brown D."/>
            <person name="Churcher C.M."/>
            <person name="Connor R."/>
            <person name="Dedman K."/>
            <person name="Gentles S."/>
            <person name="Hamlin N."/>
            <person name="Hunt S."/>
            <person name="Jones L."/>
            <person name="McDonald S."/>
            <person name="Murphy L.D."/>
            <person name="Niblett D."/>
            <person name="Odell C."/>
            <person name="Oliver K."/>
            <person name="Rajandream M.A."/>
            <person name="Richards C."/>
            <person name="Shore L."/>
            <person name="Walsh S.V."/>
            <person name="Barrell B.G."/>
            <person name="Dietrich F.S."/>
            <person name="Mulligan J.T."/>
            <person name="Allen E."/>
            <person name="Araujo R."/>
            <person name="Aviles E."/>
            <person name="Berno A."/>
            <person name="Carpenter J."/>
            <person name="Chen E."/>
            <person name="Cherry J.M."/>
            <person name="Chung E."/>
            <person name="Duncan M."/>
            <person name="Hunicke-Smith S."/>
            <person name="Hyman R.W."/>
            <person name="Komp C."/>
            <person name="Lashkari D."/>
            <person name="Lew H."/>
            <person name="Lin D."/>
            <person name="Mosedale D."/>
            <person name="Nakahara K."/>
            <person name="Namath A."/>
            <person name="Oefner P."/>
            <person name="Oh C."/>
            <person name="Petel F.X."/>
            <person name="Roberts D."/>
            <person name="Schramm S."/>
            <person name="Schroeder M."/>
            <person name="Shogren T."/>
            <person name="Shroff N."/>
            <person name="Winant A."/>
            <person name="Yelton M.A."/>
            <person name="Botstein D."/>
            <person name="Davis R.W."/>
            <person name="Johnston M."/>
            <person name="Andrews S."/>
            <person name="Brinkman R."/>
            <person name="Cooper J."/>
            <person name="Ding H."/>
            <person name="Du Z."/>
            <person name="Favello A."/>
            <person name="Fulton L."/>
            <person name="Gattung S."/>
            <person name="Greco T."/>
            <person name="Hallsworth K."/>
            <person name="Hawkins J."/>
            <person name="Hillier L.W."/>
            <person name="Jier M."/>
            <person name="Johnson D."/>
            <person name="Johnston L."/>
            <person name="Kirsten J."/>
            <person name="Kucaba T."/>
            <person name="Langston Y."/>
            <person name="Latreille P."/>
            <person name="Le T."/>
            <person name="Mardis E."/>
            <person name="Menezes S."/>
            <person name="Miller N."/>
            <person name="Nhan M."/>
            <person name="Pauley A."/>
            <person name="Peluso D."/>
            <person name="Rifkin L."/>
            <person name="Riles L."/>
            <person name="Taich A."/>
            <person name="Trevaskis E."/>
            <person name="Vignati D."/>
            <person name="Wilcox L."/>
            <person name="Wohldman P."/>
            <person name="Vaudin M."/>
            <person name="Wilson R."/>
            <person name="Waterston R."/>
            <person name="Albermann K."/>
            <person name="Hani J."/>
            <person name="Heumann K."/>
            <person name="Kleine K."/>
            <person name="Mewes H.-W."/>
            <person name="Zollner A."/>
            <person name="Zaccaria P."/>
        </authorList>
    </citation>
    <scope>NUCLEOTIDE SEQUENCE [LARGE SCALE GENOMIC DNA]</scope>
    <source>
        <strain>ATCC 204508 / S288c</strain>
    </source>
</reference>
<reference key="4">
    <citation type="journal article" date="2014" name="G3 (Bethesda)">
        <title>The reference genome sequence of Saccharomyces cerevisiae: Then and now.</title>
        <authorList>
            <person name="Engel S.R."/>
            <person name="Dietrich F.S."/>
            <person name="Fisk D.G."/>
            <person name="Binkley G."/>
            <person name="Balakrishnan R."/>
            <person name="Costanzo M.C."/>
            <person name="Dwight S.S."/>
            <person name="Hitz B.C."/>
            <person name="Karra K."/>
            <person name="Nash R.S."/>
            <person name="Weng S."/>
            <person name="Wong E.D."/>
            <person name="Lloyd P."/>
            <person name="Skrzypek M.S."/>
            <person name="Miyasato S.R."/>
            <person name="Simison M."/>
            <person name="Cherry J.M."/>
        </authorList>
    </citation>
    <scope>GENOME REANNOTATION</scope>
    <source>
        <strain>ATCC 204508 / S288c</strain>
    </source>
</reference>
<reference key="5">
    <citation type="journal article" date="1996" name="Yeast">
        <title>Analysis of a 23 kb region on the left arm of yeast chromosome IV.</title>
        <authorList>
            <person name="Delaveau T.T.D."/>
            <person name="Blugeon C."/>
            <person name="Jacq C."/>
            <person name="Perea J."/>
        </authorList>
    </citation>
    <scope>NUCLEOTIDE SEQUENCE [GENOMIC DNA] OF 799-1201</scope>
    <source>
        <strain>ATCC 96604 / S288c / FY1679</strain>
    </source>
</reference>
<reference key="6">
    <citation type="journal article" date="2003" name="Nature">
        <title>Global analysis of protein localization in budding yeast.</title>
        <authorList>
            <person name="Huh W.-K."/>
            <person name="Falvo J.V."/>
            <person name="Gerke L.C."/>
            <person name="Carroll A.S."/>
            <person name="Howson R.W."/>
            <person name="Weissman J.S."/>
            <person name="O'Shea E.K."/>
        </authorList>
    </citation>
    <scope>SUBCELLULAR LOCATION [LARGE SCALE ANALYSIS]</scope>
</reference>
<reference key="7">
    <citation type="journal article" date="2003" name="Nature">
        <title>Global analysis of protein expression in yeast.</title>
        <authorList>
            <person name="Ghaemmaghami S."/>
            <person name="Huh W.-K."/>
            <person name="Bower K."/>
            <person name="Howson R.W."/>
            <person name="Belle A."/>
            <person name="Dephoure N."/>
            <person name="O'Shea E.K."/>
            <person name="Weissman J.S."/>
        </authorList>
    </citation>
    <scope>LEVEL OF PROTEIN EXPRESSION [LARGE SCALE ANALYSIS]</scope>
</reference>
<reference key="8">
    <citation type="journal article" date="2007" name="Mol. Cell. Biol.">
        <title>Involvement of specific COPI subunits in protein sorting from the late endosome to the vacuole in yeast.</title>
        <authorList>
            <person name="Gabriely G."/>
            <person name="Kama R."/>
            <person name="Gerst J.E."/>
        </authorList>
    </citation>
    <scope>FUNCTION</scope>
    <scope>SUBCELLULAR LOCATION</scope>
    <scope>INTERACTION WITH VPS27</scope>
</reference>
<reference key="9">
    <citation type="journal article" date="2008" name="Mol. Cell. Proteomics">
        <title>A multidimensional chromatography technology for in-depth phosphoproteome analysis.</title>
        <authorList>
            <person name="Albuquerque C.P."/>
            <person name="Smolka M.B."/>
            <person name="Payne S.H."/>
            <person name="Bafna V."/>
            <person name="Eng J."/>
            <person name="Zhou H."/>
        </authorList>
    </citation>
    <scope>IDENTIFICATION BY MASS SPECTROMETRY [LARGE SCALE ANALYSIS]</scope>
</reference>
<reference key="10">
    <citation type="journal article" date="2009" name="Mol. Biol. Cell">
        <title>Kei1: a novel subunit of inositolphosphorylceramide synthase, essential for its enzyme activity and Golgi localization.</title>
        <authorList>
            <person name="Sato K."/>
            <person name="Noda Y."/>
            <person name="Yoda K."/>
        </authorList>
    </citation>
    <scope>INTERACTION WITH KEI1</scope>
</reference>
<reference key="11">
    <citation type="journal article" date="2009" name="Science">
        <title>Global analysis of Cdk1 substrate phosphorylation sites provides insights into evolution.</title>
        <authorList>
            <person name="Holt L.J."/>
            <person name="Tuch B.B."/>
            <person name="Villen J."/>
            <person name="Johnson A.D."/>
            <person name="Gygi S.P."/>
            <person name="Morgan D.O."/>
        </authorList>
    </citation>
    <scope>IDENTIFICATION BY MASS SPECTROMETRY [LARGE SCALE ANALYSIS]</scope>
</reference>
<reference key="12">
    <citation type="journal article" date="2012" name="Proc. Natl. Acad. Sci. U.S.A.">
        <title>N-terminal acetylome analyses and functional insights of the N-terminal acetyltransferase NatB.</title>
        <authorList>
            <person name="Van Damme P."/>
            <person name="Lasa M."/>
            <person name="Polevoda B."/>
            <person name="Gazquez C."/>
            <person name="Elosegui-Artola A."/>
            <person name="Kim D.S."/>
            <person name="De Juan-Pardo E."/>
            <person name="Demeyer K."/>
            <person name="Hole K."/>
            <person name="Larrea E."/>
            <person name="Timmerman E."/>
            <person name="Prieto J."/>
            <person name="Arnesen T."/>
            <person name="Sherman F."/>
            <person name="Gevaert K."/>
            <person name="Aldabe R."/>
        </authorList>
    </citation>
    <scope>IDENTIFICATION BY MASS SPECTROMETRY [LARGE SCALE ANALYSIS]</scope>
</reference>
<feature type="chain" id="PRO_0000050910" description="Coatomer subunit alpha">
    <location>
        <begin position="1"/>
        <end position="1201"/>
    </location>
</feature>
<feature type="repeat" description="WD 1">
    <location>
        <begin position="9"/>
        <end position="39"/>
    </location>
</feature>
<feature type="repeat" description="WD 2">
    <location>
        <begin position="51"/>
        <end position="81"/>
    </location>
</feature>
<feature type="repeat" description="WD 3">
    <location>
        <begin position="93"/>
        <end position="123"/>
    </location>
</feature>
<feature type="repeat" description="WD 4">
    <location>
        <begin position="135"/>
        <end position="165"/>
    </location>
</feature>
<feature type="repeat" description="WD 5">
    <location>
        <begin position="207"/>
        <end position="237"/>
    </location>
</feature>
<feature type="repeat" description="WD 6">
    <location>
        <begin position="251"/>
        <end position="281"/>
    </location>
</feature>
<feature type="region of interest" description="Disordered" evidence="1">
    <location>
        <begin position="842"/>
        <end position="862"/>
    </location>
</feature>
<feature type="compositionally biased region" description="Acidic residues" evidence="1">
    <location>
        <begin position="848"/>
        <end position="862"/>
    </location>
</feature>
<feature type="sequence conflict" description="In Ref. 1; CAA86588 and 2; CAA58712." evidence="5" ref="1 2">
    <original>F</original>
    <variation>L</variation>
    <location>
        <position position="753"/>
    </location>
</feature>
<feature type="sequence conflict" description="In Ref. 1; CAA86588 and 2; CAA58712." evidence="5" ref="1 2">
    <original>I</original>
    <variation>T</variation>
    <location>
        <position position="905"/>
    </location>
</feature>
<feature type="sequence conflict" description="In Ref. 1; CAA86588 and 2; CAA58712." evidence="5" ref="1 2">
    <original>P</original>
    <variation>L</variation>
    <location>
        <position position="1006"/>
    </location>
</feature>
<feature type="sequence conflict" description="In Ref. 1; CAA86588 and 2; CAA58712." evidence="5" ref="1 2">
    <original>DA</original>
    <variation>NT</variation>
    <location>
        <begin position="1027"/>
        <end position="1028"/>
    </location>
</feature>
<feature type="helix" evidence="6">
    <location>
        <begin position="649"/>
        <end position="658"/>
    </location>
</feature>
<feature type="helix" evidence="6">
    <location>
        <begin position="662"/>
        <end position="672"/>
    </location>
</feature>
<feature type="helix" evidence="6">
    <location>
        <begin position="675"/>
        <end position="687"/>
    </location>
</feature>
<feature type="helix" evidence="6">
    <location>
        <begin position="691"/>
        <end position="700"/>
    </location>
</feature>
<feature type="helix" evidence="6">
    <location>
        <begin position="704"/>
        <end position="714"/>
    </location>
</feature>
<feature type="helix" evidence="6">
    <location>
        <begin position="717"/>
        <end position="729"/>
    </location>
</feature>
<feature type="helix" evidence="6">
    <location>
        <begin position="733"/>
        <end position="743"/>
    </location>
</feature>
<feature type="helix" evidence="6">
    <location>
        <begin position="746"/>
        <end position="755"/>
    </location>
</feature>
<feature type="helix" evidence="6">
    <location>
        <begin position="759"/>
        <end position="768"/>
    </location>
</feature>
<feature type="helix" evidence="6">
    <location>
        <begin position="772"/>
        <end position="781"/>
    </location>
</feature>
<feature type="helix" evidence="6">
    <location>
        <begin position="786"/>
        <end position="788"/>
    </location>
</feature>
<feature type="helix" evidence="9">
    <location>
        <begin position="900"/>
        <end position="907"/>
    </location>
</feature>
<feature type="helix" evidence="9">
    <location>
        <begin position="911"/>
        <end position="917"/>
    </location>
</feature>
<feature type="helix" evidence="9">
    <location>
        <begin position="920"/>
        <end position="931"/>
    </location>
</feature>
<feature type="helix" evidence="9">
    <location>
        <begin position="937"/>
        <end position="939"/>
    </location>
</feature>
<feature type="helix" evidence="9">
    <location>
        <begin position="940"/>
        <end position="949"/>
    </location>
</feature>
<feature type="strand" evidence="9">
    <location>
        <begin position="951"/>
        <end position="954"/>
    </location>
</feature>
<feature type="strand" evidence="8">
    <location>
        <begin position="957"/>
        <end position="961"/>
    </location>
</feature>
<feature type="strand" evidence="9">
    <location>
        <begin position="964"/>
        <end position="967"/>
    </location>
</feature>
<feature type="strand" evidence="9">
    <location>
        <begin position="969"/>
        <end position="971"/>
    </location>
</feature>
<feature type="strand" evidence="7">
    <location>
        <begin position="973"/>
        <end position="975"/>
    </location>
</feature>
<feature type="helix" evidence="9">
    <location>
        <begin position="977"/>
        <end position="979"/>
    </location>
</feature>
<feature type="helix" evidence="9">
    <location>
        <begin position="987"/>
        <end position="1002"/>
    </location>
</feature>
<feature type="helix" evidence="9">
    <location>
        <begin position="1006"/>
        <end position="1021"/>
    </location>
</feature>
<feature type="strand" evidence="8">
    <location>
        <begin position="1025"/>
        <end position="1027"/>
    </location>
</feature>
<feature type="helix" evidence="9">
    <location>
        <begin position="1028"/>
        <end position="1055"/>
    </location>
</feature>
<feature type="turn" evidence="8">
    <location>
        <begin position="1059"/>
        <end position="1061"/>
    </location>
</feature>
<feature type="helix" evidence="9">
    <location>
        <begin position="1062"/>
        <end position="1072"/>
    </location>
</feature>
<feature type="helix" evidence="9">
    <location>
        <begin position="1079"/>
        <end position="1095"/>
    </location>
</feature>
<feature type="helix" evidence="9">
    <location>
        <begin position="1099"/>
        <end position="1110"/>
    </location>
</feature>
<feature type="helix" evidence="9">
    <location>
        <begin position="1117"/>
        <end position="1132"/>
    </location>
</feature>
<feature type="strand" evidence="9">
    <location>
        <begin position="1135"/>
        <end position="1137"/>
    </location>
</feature>
<feature type="strand" evidence="9">
    <location>
        <begin position="1147"/>
        <end position="1149"/>
    </location>
</feature>
<feature type="turn" evidence="9">
    <location>
        <begin position="1151"/>
        <end position="1153"/>
    </location>
</feature>
<feature type="strand" evidence="9">
    <location>
        <begin position="1156"/>
        <end position="1158"/>
    </location>
</feature>
<feature type="strand" evidence="9">
    <location>
        <begin position="1163"/>
        <end position="1165"/>
    </location>
</feature>
<feature type="turn" evidence="9">
    <location>
        <begin position="1167"/>
        <end position="1169"/>
    </location>
</feature>
<feature type="strand" evidence="9">
    <location>
        <begin position="1172"/>
        <end position="1174"/>
    </location>
</feature>
<feature type="helix" evidence="9">
    <location>
        <begin position="1175"/>
        <end position="1177"/>
    </location>
</feature>
<feature type="strand" evidence="8">
    <location>
        <begin position="1179"/>
        <end position="1181"/>
    </location>
</feature>
<feature type="turn" evidence="9">
    <location>
        <begin position="1183"/>
        <end position="1185"/>
    </location>
</feature>
<feature type="strand" evidence="9">
    <location>
        <begin position="1186"/>
        <end position="1189"/>
    </location>
</feature>
<accession>P53622</accession>
<accession>D6VRK3</accession>
<accession>Q07595</accession>
<proteinExistence type="evidence at protein level"/>
<gene>
    <name type="primary">COP1</name>
    <name type="synonym">RET1</name>
    <name type="synonym">SEC33</name>
    <name type="synonym">SOO1</name>
    <name type="ordered locus">YDL145C</name>
    <name type="ORF">D1578</name>
</gene>
<name>COPA_YEAST</name>
<comment type="function">
    <text evidence="3">The coatomer is a cytosolic protein complex that binds to dilysine motifs and reversibly associates with Golgi non-clathrin-coated vesicles, which further mediate biosynthetic protein transport from the ER, via the Golgi up to the trans Golgi network. Coatomer complex is required for budding from Golgi membranes, and is essential for the retrograde Golgi-to-ER transport of dilysine-tagged proteins.</text>
</comment>
<comment type="subunit">
    <text evidence="3 4">Oligomeric complex that consists of at least the alpha, beta, beta', gamma, delta, epsilon and zeta subunits. Interacts with the ESCRT-0 subunit VPS27. Interacts with KEI1 (via C-terminal region).</text>
</comment>
<comment type="interaction">
    <interactant intactId="EBI-4860">
        <id>P53622</id>
    </interactant>
    <interactant intactId="EBI-4898">
        <id>P41811</id>
        <label>SEC27</label>
    </interactant>
    <organismsDiffer>false</organismsDiffer>
    <experiments>18</experiments>
</comment>
<comment type="interaction">
    <interactant intactId="EBI-4860">
        <id>P53622</id>
    </interactant>
    <interactant intactId="EBI-4884">
        <id>P40509</id>
        <label>SEC28</label>
    </interactant>
    <organismsDiffer>false</organismsDiffer>
    <experiments>12</experiments>
</comment>
<comment type="interaction">
    <interactant intactId="EBI-4860">
        <id>P53622</id>
    </interactant>
    <interactant intactId="EBI-12658">
        <id>P33767</id>
        <label>WBP1</label>
    </interactant>
    <organismsDiffer>false</organismsDiffer>
    <experiments>3</experiments>
</comment>
<comment type="subcellular location">
    <subcellularLocation>
        <location>Cytoplasm</location>
    </subcellularLocation>
    <subcellularLocation>
        <location>Golgi apparatus membrane</location>
        <topology>Peripheral membrane protein</topology>
        <orientation>Cytoplasmic side</orientation>
    </subcellularLocation>
    <subcellularLocation>
        <location>Cytoplasmic vesicle</location>
        <location>COPI-coated vesicle membrane</location>
        <topology>Peripheral membrane protein</topology>
        <orientation>Cytoplasmic side</orientation>
    </subcellularLocation>
    <text>The coatomer is cytoplasmic or polymerized on the cytoplasmic side of the Golgi, as well as on the vesicles/buds originating from it.</text>
</comment>
<comment type="miscellaneous">
    <text evidence="2">Present with 15200 molecules/cell in log phase SD medium.</text>
</comment>
<protein>
    <recommendedName>
        <fullName>Coatomer subunit alpha</fullName>
    </recommendedName>
    <alternativeName>
        <fullName>Alpha-coat protein</fullName>
        <shortName>Alpha-COP</shortName>
    </alternativeName>
    <alternativeName>
        <fullName>Retrieval from endoplasmic reticulum protein 1</fullName>
    </alternativeName>
    <alternativeName>
        <fullName>Secretory protein 22</fullName>
    </alternativeName>
    <alternativeName>
        <fullName>Suppressor of osmo-sensitivity 1</fullName>
    </alternativeName>
</protein>
<keyword id="KW-0002">3D-structure</keyword>
<keyword id="KW-0963">Cytoplasm</keyword>
<keyword id="KW-0968">Cytoplasmic vesicle</keyword>
<keyword id="KW-0903">Direct protein sequencing</keyword>
<keyword id="KW-0931">ER-Golgi transport</keyword>
<keyword id="KW-0333">Golgi apparatus</keyword>
<keyword id="KW-0472">Membrane</keyword>
<keyword id="KW-0653">Protein transport</keyword>
<keyword id="KW-1185">Reference proteome</keyword>
<keyword id="KW-0677">Repeat</keyword>
<keyword id="KW-0813">Transport</keyword>
<keyword id="KW-0853">WD repeat</keyword>
<evidence type="ECO:0000256" key="1">
    <source>
        <dbReference type="SAM" id="MobiDB-lite"/>
    </source>
</evidence>
<evidence type="ECO:0000269" key="2">
    <source>
    </source>
</evidence>
<evidence type="ECO:0000269" key="3">
    <source>
    </source>
</evidence>
<evidence type="ECO:0000269" key="4">
    <source>
    </source>
</evidence>
<evidence type="ECO:0000305" key="5"/>
<evidence type="ECO:0007829" key="6">
    <source>
        <dbReference type="PDB" id="3MKQ"/>
    </source>
</evidence>
<evidence type="ECO:0007829" key="7">
    <source>
        <dbReference type="PDB" id="3MV2"/>
    </source>
</evidence>
<evidence type="ECO:0007829" key="8">
    <source>
        <dbReference type="PDB" id="3MV3"/>
    </source>
</evidence>
<evidence type="ECO:0007829" key="9">
    <source>
        <dbReference type="PDB" id="6U3W"/>
    </source>
</evidence>
<sequence length="1201" mass="135607">MKMLTKFESKSTRAKGIAFHPSRPWVLVALFSSTIQLWDYRMGTLLHRFEDHEGPVRGLDFHPTQPIFVSAGDDYTIKVWSLDTNKCLYTLTGHLDYVRTVFFHRELPWIISASDDQTIRIWNWQNRKEIACLTGHNHFVMCAQFHPTDDLIVSASLDETIRIWDISGLRKRHSAPGTSSFEEQMSAQQNLLDGSLGDCVVKFILEGHTRGVNWASFHPTLPLIVSGSDDRQVKLWRMSATKAWEVDTCRGHTNNVDSVIFHPHQNLIISVGEDKTLRVWDLDKRTPVKQFKRENDRFWLIAAHPHINLFGAAHDSGIMVFKLDRERPCSFIHQNQLFFVNAEKQIQSFNFQKRVASLPYASLKGIGQPWDAFRSISYNPSQHSVLVNEANGKFALVILPKQPVGAVEPTSVTQDTGNFATFVGRNRFVVYNKNTESVEVRSLENKVTRNIKVEETVRTIVAAGPGSVLVIHPREVILYDVQQGKKVSQLAVKNVKYVSWSLDGQYVALMSKHTITLATKKLELINSMHETIRIKSAAWDETGVLIYSTLNHIRYSLLNGDRGIIKTLEKTLYITKVQGKLVYCLNREGEIEILTIDPTEYRFKKALVNKNFPEVLRLIKDSNLVGQNIISYLQKSGYPEIALQFVQDPHIRFDLALEYGNLDVALDEAKKLNDSSTWERLIQEALAQGNASLAEMIYQTQHSFDKLSFLYLVTGDVNKLSKMQNIAQTREDFGSMLLNTFYNNSTKERSSIFAEGGSLPLAYAVAKANGDEAAASAFLEQAEVDEQDVTLPDQMDASNFVQRPVISKPLEKWPLKEAELSYFEKAVLGQIDDLTIDDETPAVNTTQEQEEPLGEENFNDEDIGEDEGAWDLGDEDLDVGEELPEEVEQGEITSPAQEVETAIWIKNSKLPAVLVAAGAFDAAVQALSKQVGVVKLEPLKKYFTNIYEGCRTYIPSTPCELPAQLGYVRAYDDTVSEDQILPYVPGLDVVNEKMNEGYKNFKLNKPDIAIECFREAIYRITLLMVDDAEDEKLAHKILETAREYILGLSIELERRSLKEGNTVRMLELAAYFTKAKLSPIHRTNALQVAMSQHFKHKNFLQASYFAGEFLKIISSGPRAEQARKIKNKADSMASDAIPIDFDPYAKFDICAATYKPIYEDTPSVSDPLTGSKYVITEKDKIDRIAMISKIGAPASGLRIRV</sequence>